<sequence length="155" mass="16684">MIDLIARKRPPAGLRPALRASLSAAMQHFGGEEREVTVVLVGDPEIRALKLEHWGEDAATDVLSFPTWEPGDPFMPPHLGDIIISLDTAQRQAESRGHSLTREVALLASHGLTHLVGHDHPHAEGLGFEEGATGEDWQVFHDAWAAAQTGLPAGA</sequence>
<organism>
    <name type="scientific">Deinococcus radiodurans (strain ATCC 13939 / DSM 20539 / JCM 16871 / CCUG 27074 / LMG 4051 / NBRC 15346 / NCIMB 9279 / VKM B-1422 / R1)</name>
    <dbReference type="NCBI Taxonomy" id="243230"/>
    <lineage>
        <taxon>Bacteria</taxon>
        <taxon>Thermotogati</taxon>
        <taxon>Deinococcota</taxon>
        <taxon>Deinococci</taxon>
        <taxon>Deinococcales</taxon>
        <taxon>Deinococcaceae</taxon>
        <taxon>Deinococcus</taxon>
    </lineage>
</organism>
<dbReference type="EC" id="3.1.-.-" evidence="1"/>
<dbReference type="EMBL" id="AE000513">
    <property type="protein sequence ID" value="AAF11642.1"/>
    <property type="status" value="ALT_INIT"/>
    <property type="molecule type" value="Genomic_DNA"/>
</dbReference>
<dbReference type="PIR" id="B75315">
    <property type="entry name" value="B75315"/>
</dbReference>
<dbReference type="RefSeq" id="NP_295815.1">
    <property type="nucleotide sequence ID" value="NC_001263.1"/>
</dbReference>
<dbReference type="RefSeq" id="WP_027479950.1">
    <property type="nucleotide sequence ID" value="NC_001263.1"/>
</dbReference>
<dbReference type="SMR" id="Q9RSN2"/>
<dbReference type="FunCoup" id="Q9RSN2">
    <property type="interactions" value="346"/>
</dbReference>
<dbReference type="STRING" id="243230.DR_2092"/>
<dbReference type="PaxDb" id="243230-DR_2092"/>
<dbReference type="EnsemblBacteria" id="AAF11642">
    <property type="protein sequence ID" value="AAF11642"/>
    <property type="gene ID" value="DR_2092"/>
</dbReference>
<dbReference type="GeneID" id="69518333"/>
<dbReference type="KEGG" id="dra:DR_2092"/>
<dbReference type="PATRIC" id="fig|243230.17.peg.2316"/>
<dbReference type="eggNOG" id="COG0319">
    <property type="taxonomic scope" value="Bacteria"/>
</dbReference>
<dbReference type="HOGENOM" id="CLU_1692595_0_0_0"/>
<dbReference type="InParanoid" id="Q9RSN2"/>
<dbReference type="OrthoDB" id="9807740at2"/>
<dbReference type="Proteomes" id="UP000002524">
    <property type="component" value="Chromosome 1"/>
</dbReference>
<dbReference type="GO" id="GO:0005737">
    <property type="term" value="C:cytoplasm"/>
    <property type="evidence" value="ECO:0007669"/>
    <property type="project" value="UniProtKB-SubCell"/>
</dbReference>
<dbReference type="GO" id="GO:0004222">
    <property type="term" value="F:metalloendopeptidase activity"/>
    <property type="evidence" value="ECO:0007669"/>
    <property type="project" value="InterPro"/>
</dbReference>
<dbReference type="GO" id="GO:0004521">
    <property type="term" value="F:RNA endonuclease activity"/>
    <property type="evidence" value="ECO:0007669"/>
    <property type="project" value="UniProtKB-UniRule"/>
</dbReference>
<dbReference type="GO" id="GO:0008270">
    <property type="term" value="F:zinc ion binding"/>
    <property type="evidence" value="ECO:0007669"/>
    <property type="project" value="UniProtKB-UniRule"/>
</dbReference>
<dbReference type="GO" id="GO:0006364">
    <property type="term" value="P:rRNA processing"/>
    <property type="evidence" value="ECO:0007669"/>
    <property type="project" value="UniProtKB-UniRule"/>
</dbReference>
<dbReference type="Gene3D" id="3.40.390.30">
    <property type="entry name" value="Metalloproteases ('zincins'), catalytic domain"/>
    <property type="match status" value="1"/>
</dbReference>
<dbReference type="HAMAP" id="MF_00009">
    <property type="entry name" value="Endoribonucl_YbeY"/>
    <property type="match status" value="1"/>
</dbReference>
<dbReference type="InterPro" id="IPR023091">
    <property type="entry name" value="MetalPrtase_cat_dom_sf_prd"/>
</dbReference>
<dbReference type="InterPro" id="IPR002036">
    <property type="entry name" value="YbeY"/>
</dbReference>
<dbReference type="InterPro" id="IPR020549">
    <property type="entry name" value="YbeY_CS"/>
</dbReference>
<dbReference type="NCBIfam" id="TIGR00043">
    <property type="entry name" value="rRNA maturation RNase YbeY"/>
    <property type="match status" value="1"/>
</dbReference>
<dbReference type="PANTHER" id="PTHR46986">
    <property type="entry name" value="ENDORIBONUCLEASE YBEY, CHLOROPLASTIC"/>
    <property type="match status" value="1"/>
</dbReference>
<dbReference type="PANTHER" id="PTHR46986:SF1">
    <property type="entry name" value="ENDORIBONUCLEASE YBEY, CHLOROPLASTIC"/>
    <property type="match status" value="1"/>
</dbReference>
<dbReference type="Pfam" id="PF02130">
    <property type="entry name" value="YbeY"/>
    <property type="match status" value="1"/>
</dbReference>
<dbReference type="SUPFAM" id="SSF55486">
    <property type="entry name" value="Metalloproteases ('zincins'), catalytic domain"/>
    <property type="match status" value="1"/>
</dbReference>
<dbReference type="PROSITE" id="PS01306">
    <property type="entry name" value="UPF0054"/>
    <property type="match status" value="1"/>
</dbReference>
<keyword id="KW-0963">Cytoplasm</keyword>
<keyword id="KW-0255">Endonuclease</keyword>
<keyword id="KW-0378">Hydrolase</keyword>
<keyword id="KW-0479">Metal-binding</keyword>
<keyword id="KW-0540">Nuclease</keyword>
<keyword id="KW-1185">Reference proteome</keyword>
<keyword id="KW-0690">Ribosome biogenesis</keyword>
<keyword id="KW-0698">rRNA processing</keyword>
<keyword id="KW-0862">Zinc</keyword>
<protein>
    <recommendedName>
        <fullName evidence="1">Endoribonuclease YbeY</fullName>
        <ecNumber evidence="1">3.1.-.-</ecNumber>
    </recommendedName>
</protein>
<reference key="1">
    <citation type="journal article" date="1999" name="Science">
        <title>Genome sequence of the radioresistant bacterium Deinococcus radiodurans R1.</title>
        <authorList>
            <person name="White O."/>
            <person name="Eisen J.A."/>
            <person name="Heidelberg J.F."/>
            <person name="Hickey E.K."/>
            <person name="Peterson J.D."/>
            <person name="Dodson R.J."/>
            <person name="Haft D.H."/>
            <person name="Gwinn M.L."/>
            <person name="Nelson W.C."/>
            <person name="Richardson D.L."/>
            <person name="Moffat K.S."/>
            <person name="Qin H."/>
            <person name="Jiang L."/>
            <person name="Pamphile W."/>
            <person name="Crosby M."/>
            <person name="Shen M."/>
            <person name="Vamathevan J.J."/>
            <person name="Lam P."/>
            <person name="McDonald L.A."/>
            <person name="Utterback T.R."/>
            <person name="Zalewski C."/>
            <person name="Makarova K.S."/>
            <person name="Aravind L."/>
            <person name="Daly M.J."/>
            <person name="Minton K.W."/>
            <person name="Fleischmann R.D."/>
            <person name="Ketchum K.A."/>
            <person name="Nelson K.E."/>
            <person name="Salzberg S.L."/>
            <person name="Smith H.O."/>
            <person name="Venter J.C."/>
            <person name="Fraser C.M."/>
        </authorList>
    </citation>
    <scope>NUCLEOTIDE SEQUENCE [LARGE SCALE GENOMIC DNA]</scope>
    <source>
        <strain>ATCC 13939 / DSM 20539 / JCM 16871 / CCUG 27074 / LMG 4051 / NBRC 15346 / NCIMB 9279 / VKM B-1422 / R1</strain>
    </source>
</reference>
<evidence type="ECO:0000255" key="1">
    <source>
        <dbReference type="HAMAP-Rule" id="MF_00009"/>
    </source>
</evidence>
<evidence type="ECO:0000305" key="2"/>
<feature type="chain" id="PRO_0000102447" description="Endoribonuclease YbeY">
    <location>
        <begin position="1"/>
        <end position="155"/>
    </location>
</feature>
<feature type="binding site" evidence="1">
    <location>
        <position position="110"/>
    </location>
    <ligand>
        <name>Zn(2+)</name>
        <dbReference type="ChEBI" id="CHEBI:29105"/>
        <note>catalytic</note>
    </ligand>
</feature>
<feature type="binding site" evidence="1">
    <location>
        <position position="114"/>
    </location>
    <ligand>
        <name>Zn(2+)</name>
        <dbReference type="ChEBI" id="CHEBI:29105"/>
        <note>catalytic</note>
    </ligand>
</feature>
<feature type="binding site" evidence="1">
    <location>
        <position position="120"/>
    </location>
    <ligand>
        <name>Zn(2+)</name>
        <dbReference type="ChEBI" id="CHEBI:29105"/>
        <note>catalytic</note>
    </ligand>
</feature>
<name>YBEY_DEIRA</name>
<proteinExistence type="inferred from homology"/>
<comment type="function">
    <text evidence="1">Single strand-specific metallo-endoribonuclease involved in late-stage 70S ribosome quality control and in maturation of the 3' terminus of the 16S rRNA.</text>
</comment>
<comment type="cofactor">
    <cofactor evidence="1">
        <name>Zn(2+)</name>
        <dbReference type="ChEBI" id="CHEBI:29105"/>
    </cofactor>
    <text evidence="1">Binds 1 zinc ion.</text>
</comment>
<comment type="subcellular location">
    <subcellularLocation>
        <location evidence="1">Cytoplasm</location>
    </subcellularLocation>
</comment>
<comment type="similarity">
    <text evidence="1">Belongs to the endoribonuclease YbeY family.</text>
</comment>
<comment type="sequence caution" evidence="2">
    <conflict type="erroneous initiation">
        <sequence resource="EMBL-CDS" id="AAF11642"/>
    </conflict>
</comment>
<accession>Q9RSN2</accession>
<gene>
    <name evidence="1" type="primary">ybeY</name>
    <name type="ordered locus">DR_2092</name>
</gene>